<gene>
    <name evidence="1" type="primary">argG</name>
    <name type="ordered locus">YPTB1579</name>
</gene>
<organism>
    <name type="scientific">Yersinia pseudotuberculosis serotype I (strain IP32953)</name>
    <dbReference type="NCBI Taxonomy" id="273123"/>
    <lineage>
        <taxon>Bacteria</taxon>
        <taxon>Pseudomonadati</taxon>
        <taxon>Pseudomonadota</taxon>
        <taxon>Gammaproteobacteria</taxon>
        <taxon>Enterobacterales</taxon>
        <taxon>Yersiniaceae</taxon>
        <taxon>Yersinia</taxon>
    </lineage>
</organism>
<dbReference type="EC" id="6.3.4.5" evidence="1"/>
<dbReference type="EMBL" id="BX936398">
    <property type="protein sequence ID" value="CAH20818.1"/>
    <property type="molecule type" value="Genomic_DNA"/>
</dbReference>
<dbReference type="RefSeq" id="WP_002211920.1">
    <property type="nucleotide sequence ID" value="NZ_CP009712.1"/>
</dbReference>
<dbReference type="SMR" id="Q66C31"/>
<dbReference type="GeneID" id="96665184"/>
<dbReference type="KEGG" id="ypo:BZ17_933"/>
<dbReference type="KEGG" id="yps:YPTB1579"/>
<dbReference type="PATRIC" id="fig|273123.14.peg.988"/>
<dbReference type="UniPathway" id="UPA00068">
    <property type="reaction ID" value="UER00113"/>
</dbReference>
<dbReference type="Proteomes" id="UP000001011">
    <property type="component" value="Chromosome"/>
</dbReference>
<dbReference type="GO" id="GO:0005737">
    <property type="term" value="C:cytoplasm"/>
    <property type="evidence" value="ECO:0007669"/>
    <property type="project" value="UniProtKB-SubCell"/>
</dbReference>
<dbReference type="GO" id="GO:0004055">
    <property type="term" value="F:argininosuccinate synthase activity"/>
    <property type="evidence" value="ECO:0007669"/>
    <property type="project" value="UniProtKB-UniRule"/>
</dbReference>
<dbReference type="GO" id="GO:0005524">
    <property type="term" value="F:ATP binding"/>
    <property type="evidence" value="ECO:0007669"/>
    <property type="project" value="UniProtKB-UniRule"/>
</dbReference>
<dbReference type="GO" id="GO:0042803">
    <property type="term" value="F:protein homodimerization activity"/>
    <property type="evidence" value="ECO:0007669"/>
    <property type="project" value="InterPro"/>
</dbReference>
<dbReference type="GO" id="GO:0000053">
    <property type="term" value="P:argininosuccinate metabolic process"/>
    <property type="evidence" value="ECO:0007669"/>
    <property type="project" value="TreeGrafter"/>
</dbReference>
<dbReference type="GO" id="GO:0006526">
    <property type="term" value="P:L-arginine biosynthetic process"/>
    <property type="evidence" value="ECO:0007669"/>
    <property type="project" value="UniProtKB-UniRule"/>
</dbReference>
<dbReference type="GO" id="GO:0000050">
    <property type="term" value="P:urea cycle"/>
    <property type="evidence" value="ECO:0007669"/>
    <property type="project" value="TreeGrafter"/>
</dbReference>
<dbReference type="CDD" id="cd01999">
    <property type="entry name" value="ASS"/>
    <property type="match status" value="1"/>
</dbReference>
<dbReference type="FunFam" id="1.10.287.400:FF:000001">
    <property type="entry name" value="Argininosuccinate synthase"/>
    <property type="match status" value="1"/>
</dbReference>
<dbReference type="Gene3D" id="1.10.287.400">
    <property type="match status" value="1"/>
</dbReference>
<dbReference type="Gene3D" id="3.90.1260.10">
    <property type="entry name" value="Argininosuccinate synthetase, chain A, domain 2"/>
    <property type="match status" value="1"/>
</dbReference>
<dbReference type="Gene3D" id="3.40.50.620">
    <property type="entry name" value="HUPs"/>
    <property type="match status" value="1"/>
</dbReference>
<dbReference type="HAMAP" id="MF_00581">
    <property type="entry name" value="Arg_succ_synth_type2"/>
    <property type="match status" value="1"/>
</dbReference>
<dbReference type="InterPro" id="IPR023437">
    <property type="entry name" value="Arg_succ_synth_type2_subfam"/>
</dbReference>
<dbReference type="InterPro" id="IPR048268">
    <property type="entry name" value="Arginosuc_syn_C"/>
</dbReference>
<dbReference type="InterPro" id="IPR048267">
    <property type="entry name" value="Arginosuc_syn_N"/>
</dbReference>
<dbReference type="InterPro" id="IPR001518">
    <property type="entry name" value="Arginosuc_synth"/>
</dbReference>
<dbReference type="InterPro" id="IPR018223">
    <property type="entry name" value="Arginosuc_synth_CS"/>
</dbReference>
<dbReference type="InterPro" id="IPR023434">
    <property type="entry name" value="Arginosuc_synth_type_1_subfam"/>
</dbReference>
<dbReference type="InterPro" id="IPR024074">
    <property type="entry name" value="AS_cat/multimer_dom_body"/>
</dbReference>
<dbReference type="InterPro" id="IPR024073">
    <property type="entry name" value="AS_multimer_C_tail"/>
</dbReference>
<dbReference type="InterPro" id="IPR014729">
    <property type="entry name" value="Rossmann-like_a/b/a_fold"/>
</dbReference>
<dbReference type="NCBIfam" id="TIGR00032">
    <property type="entry name" value="argG"/>
    <property type="match status" value="1"/>
</dbReference>
<dbReference type="NCBIfam" id="NF003779">
    <property type="entry name" value="PRK05370.1"/>
    <property type="match status" value="1"/>
</dbReference>
<dbReference type="PANTHER" id="PTHR11587">
    <property type="entry name" value="ARGININOSUCCINATE SYNTHASE"/>
    <property type="match status" value="1"/>
</dbReference>
<dbReference type="PANTHER" id="PTHR11587:SF2">
    <property type="entry name" value="ARGININOSUCCINATE SYNTHASE"/>
    <property type="match status" value="1"/>
</dbReference>
<dbReference type="Pfam" id="PF20979">
    <property type="entry name" value="Arginosuc_syn_C"/>
    <property type="match status" value="1"/>
</dbReference>
<dbReference type="Pfam" id="PF00764">
    <property type="entry name" value="Arginosuc_synth"/>
    <property type="match status" value="1"/>
</dbReference>
<dbReference type="SUPFAM" id="SSF52402">
    <property type="entry name" value="Adenine nucleotide alpha hydrolases-like"/>
    <property type="match status" value="1"/>
</dbReference>
<dbReference type="SUPFAM" id="SSF69864">
    <property type="entry name" value="Argininosuccinate synthetase, C-terminal domain"/>
    <property type="match status" value="1"/>
</dbReference>
<dbReference type="PROSITE" id="PS00564">
    <property type="entry name" value="ARGININOSUCCIN_SYN_1"/>
    <property type="match status" value="1"/>
</dbReference>
<dbReference type="PROSITE" id="PS00565">
    <property type="entry name" value="ARGININOSUCCIN_SYN_2"/>
    <property type="match status" value="1"/>
</dbReference>
<proteinExistence type="inferred from homology"/>
<accession>Q66C31</accession>
<name>ASSY_YERPS</name>
<protein>
    <recommendedName>
        <fullName evidence="1">Argininosuccinate synthase</fullName>
        <ecNumber evidence="1">6.3.4.5</ecNumber>
    </recommendedName>
    <alternativeName>
        <fullName evidence="1">Citrulline--aspartate ligase</fullName>
    </alternativeName>
</protein>
<keyword id="KW-0028">Amino-acid biosynthesis</keyword>
<keyword id="KW-0055">Arginine biosynthesis</keyword>
<keyword id="KW-0067">ATP-binding</keyword>
<keyword id="KW-0963">Cytoplasm</keyword>
<keyword id="KW-0436">Ligase</keyword>
<keyword id="KW-0547">Nucleotide-binding</keyword>
<sequence length="455" mass="51009">MTTILKHLPINQRVGIAFSGGLDTSAALLWMQKKGAIPYAYTANLGQPDEEDYEAIPRKAMEYGAEKARLIDCRKQLVAEGIAAIQCGAFHNTTAGVTYFNTTPLGRAVTGTMLVAAMKEDDVNIWGDGSTYKGNDIERFYRYGLLTNAELKIYKPWLDTDFIDELGGRHEMSEFMIQSGFDYKMSTEKAYSTDSNMLGATHEAKDLEFLNSSVKIVNPIMGVKFWDENVVVKAEEVTVRFERGYPVALNGVVFDDSVELMMEANRIGGRHGLGMSDQIENRIIEAKSRGIYEAPGMALLHIAYERLLTGIHNEDTIEQYHANGRVLGRLLYQGRWFDPQALMLRDSIQRWVASEITGEVTLELRRGNDYSILNTVSDNLTYKPERLTMEKGDSVFSPDDRIGQLTMRNLDITDTREKLFNYVETGLLTSSAATGLPQVDNNNLSSGRGLQDKRQ</sequence>
<reference key="1">
    <citation type="journal article" date="2004" name="Proc. Natl. Acad. Sci. U.S.A.">
        <title>Insights into the evolution of Yersinia pestis through whole-genome comparison with Yersinia pseudotuberculosis.</title>
        <authorList>
            <person name="Chain P.S.G."/>
            <person name="Carniel E."/>
            <person name="Larimer F.W."/>
            <person name="Lamerdin J."/>
            <person name="Stoutland P.O."/>
            <person name="Regala W.M."/>
            <person name="Georgescu A.M."/>
            <person name="Vergez L.M."/>
            <person name="Land M.L."/>
            <person name="Motin V.L."/>
            <person name="Brubaker R.R."/>
            <person name="Fowler J."/>
            <person name="Hinnebusch J."/>
            <person name="Marceau M."/>
            <person name="Medigue C."/>
            <person name="Simonet M."/>
            <person name="Chenal-Francisque V."/>
            <person name="Souza B."/>
            <person name="Dacheux D."/>
            <person name="Elliott J.M."/>
            <person name="Derbise A."/>
            <person name="Hauser L.J."/>
            <person name="Garcia E."/>
        </authorList>
    </citation>
    <scope>NUCLEOTIDE SEQUENCE [LARGE SCALE GENOMIC DNA]</scope>
    <source>
        <strain>IP32953</strain>
    </source>
</reference>
<feature type="chain" id="PRO_1000025448" description="Argininosuccinate synthase">
    <location>
        <begin position="1"/>
        <end position="455"/>
    </location>
</feature>
<feature type="region of interest" description="Disordered" evidence="2">
    <location>
        <begin position="434"/>
        <end position="455"/>
    </location>
</feature>
<feature type="compositionally biased region" description="Polar residues" evidence="2">
    <location>
        <begin position="434"/>
        <end position="448"/>
    </location>
</feature>
<feature type="binding site" evidence="1">
    <location>
        <begin position="17"/>
        <end position="25"/>
    </location>
    <ligand>
        <name>ATP</name>
        <dbReference type="ChEBI" id="CHEBI:30616"/>
    </ligand>
</feature>
<feature type="binding site" evidence="1">
    <location>
        <position position="43"/>
    </location>
    <ligand>
        <name>ATP</name>
        <dbReference type="ChEBI" id="CHEBI:30616"/>
    </ligand>
</feature>
<feature type="binding site" evidence="1">
    <location>
        <position position="99"/>
    </location>
    <ligand>
        <name>L-citrulline</name>
        <dbReference type="ChEBI" id="CHEBI:57743"/>
    </ligand>
</feature>
<feature type="binding site" evidence="1">
    <location>
        <position position="129"/>
    </location>
    <ligand>
        <name>ATP</name>
        <dbReference type="ChEBI" id="CHEBI:30616"/>
    </ligand>
</feature>
<feature type="binding site" evidence="1">
    <location>
        <position position="131"/>
    </location>
    <ligand>
        <name>ATP</name>
        <dbReference type="ChEBI" id="CHEBI:30616"/>
    </ligand>
</feature>
<feature type="binding site" evidence="1">
    <location>
        <position position="131"/>
    </location>
    <ligand>
        <name>L-aspartate</name>
        <dbReference type="ChEBI" id="CHEBI:29991"/>
    </ligand>
</feature>
<feature type="binding site" evidence="1">
    <location>
        <position position="135"/>
    </location>
    <ligand>
        <name>L-aspartate</name>
        <dbReference type="ChEBI" id="CHEBI:29991"/>
    </ligand>
</feature>
<feature type="binding site" evidence="1">
    <location>
        <position position="135"/>
    </location>
    <ligand>
        <name>L-citrulline</name>
        <dbReference type="ChEBI" id="CHEBI:57743"/>
    </ligand>
</feature>
<feature type="binding site" evidence="1">
    <location>
        <position position="136"/>
    </location>
    <ligand>
        <name>ATP</name>
        <dbReference type="ChEBI" id="CHEBI:30616"/>
    </ligand>
</feature>
<feature type="binding site" evidence="1">
    <location>
        <position position="136"/>
    </location>
    <ligand>
        <name>L-aspartate</name>
        <dbReference type="ChEBI" id="CHEBI:29991"/>
    </ligand>
</feature>
<feature type="binding site" evidence="1">
    <location>
        <position position="139"/>
    </location>
    <ligand>
        <name>L-citrulline</name>
        <dbReference type="ChEBI" id="CHEBI:57743"/>
    </ligand>
</feature>
<feature type="binding site" evidence="1">
    <location>
        <position position="192"/>
    </location>
    <ligand>
        <name>L-citrulline</name>
        <dbReference type="ChEBI" id="CHEBI:57743"/>
    </ligand>
</feature>
<feature type="binding site" evidence="1">
    <location>
        <position position="194"/>
    </location>
    <ligand>
        <name>ATP</name>
        <dbReference type="ChEBI" id="CHEBI:30616"/>
    </ligand>
</feature>
<feature type="binding site" evidence="1">
    <location>
        <position position="201"/>
    </location>
    <ligand>
        <name>L-citrulline</name>
        <dbReference type="ChEBI" id="CHEBI:57743"/>
    </ligand>
</feature>
<feature type="binding site" evidence="1">
    <location>
        <position position="203"/>
    </location>
    <ligand>
        <name>L-citrulline</name>
        <dbReference type="ChEBI" id="CHEBI:57743"/>
    </ligand>
</feature>
<feature type="binding site" evidence="1">
    <location>
        <position position="280"/>
    </location>
    <ligand>
        <name>L-citrulline</name>
        <dbReference type="ChEBI" id="CHEBI:57743"/>
    </ligand>
</feature>
<evidence type="ECO:0000255" key="1">
    <source>
        <dbReference type="HAMAP-Rule" id="MF_00581"/>
    </source>
</evidence>
<evidence type="ECO:0000256" key="2">
    <source>
        <dbReference type="SAM" id="MobiDB-lite"/>
    </source>
</evidence>
<comment type="catalytic activity">
    <reaction evidence="1">
        <text>L-citrulline + L-aspartate + ATP = 2-(N(omega)-L-arginino)succinate + AMP + diphosphate + H(+)</text>
        <dbReference type="Rhea" id="RHEA:10932"/>
        <dbReference type="ChEBI" id="CHEBI:15378"/>
        <dbReference type="ChEBI" id="CHEBI:29991"/>
        <dbReference type="ChEBI" id="CHEBI:30616"/>
        <dbReference type="ChEBI" id="CHEBI:33019"/>
        <dbReference type="ChEBI" id="CHEBI:57472"/>
        <dbReference type="ChEBI" id="CHEBI:57743"/>
        <dbReference type="ChEBI" id="CHEBI:456215"/>
        <dbReference type="EC" id="6.3.4.5"/>
    </reaction>
</comment>
<comment type="pathway">
    <text evidence="1">Amino-acid biosynthesis; L-arginine biosynthesis; L-arginine from L-ornithine and carbamoyl phosphate: step 2/3.</text>
</comment>
<comment type="subunit">
    <text evidence="1">Homotetramer.</text>
</comment>
<comment type="subcellular location">
    <subcellularLocation>
        <location evidence="1">Cytoplasm</location>
    </subcellularLocation>
</comment>
<comment type="similarity">
    <text evidence="1">Belongs to the argininosuccinate synthase family. Type 2 subfamily.</text>
</comment>